<reference key="1">
    <citation type="submission" date="2009-05" db="EMBL/GenBank/DDBJ databases">
        <title>Complete sequence of Tolumonas auensis DSM 9187.</title>
        <authorList>
            <consortium name="US DOE Joint Genome Institute"/>
            <person name="Lucas S."/>
            <person name="Copeland A."/>
            <person name="Lapidus A."/>
            <person name="Glavina del Rio T."/>
            <person name="Tice H."/>
            <person name="Bruce D."/>
            <person name="Goodwin L."/>
            <person name="Pitluck S."/>
            <person name="Chertkov O."/>
            <person name="Brettin T."/>
            <person name="Detter J.C."/>
            <person name="Han C."/>
            <person name="Larimer F."/>
            <person name="Land M."/>
            <person name="Hauser L."/>
            <person name="Kyrpides N."/>
            <person name="Mikhailova N."/>
            <person name="Spring S."/>
            <person name="Beller H."/>
        </authorList>
    </citation>
    <scope>NUCLEOTIDE SEQUENCE [LARGE SCALE GENOMIC DNA]</scope>
    <source>
        <strain>DSM 9187 / NBRC 110442 / TA 4</strain>
    </source>
</reference>
<proteinExistence type="inferred from homology"/>
<evidence type="ECO:0000255" key="1">
    <source>
        <dbReference type="HAMAP-Rule" id="MF_01026"/>
    </source>
</evidence>
<comment type="function">
    <text evidence="1">Catalyzes the isomerization between 2-isopropylmalate and 3-isopropylmalate, via the formation of 2-isopropylmaleate.</text>
</comment>
<comment type="catalytic activity">
    <reaction evidence="1">
        <text>(2R,3S)-3-isopropylmalate = (2S)-2-isopropylmalate</text>
        <dbReference type="Rhea" id="RHEA:32287"/>
        <dbReference type="ChEBI" id="CHEBI:1178"/>
        <dbReference type="ChEBI" id="CHEBI:35121"/>
        <dbReference type="EC" id="4.2.1.33"/>
    </reaction>
</comment>
<comment type="cofactor">
    <cofactor evidence="1">
        <name>[4Fe-4S] cluster</name>
        <dbReference type="ChEBI" id="CHEBI:49883"/>
    </cofactor>
    <text evidence="1">Binds 1 [4Fe-4S] cluster per subunit.</text>
</comment>
<comment type="pathway">
    <text evidence="1">Amino-acid biosynthesis; L-leucine biosynthesis; L-leucine from 3-methyl-2-oxobutanoate: step 2/4.</text>
</comment>
<comment type="subunit">
    <text evidence="1">Heterodimer of LeuC and LeuD.</text>
</comment>
<comment type="similarity">
    <text evidence="1">Belongs to the aconitase/IPM isomerase family. LeuC type 1 subfamily.</text>
</comment>
<organism>
    <name type="scientific">Tolumonas auensis (strain DSM 9187 / NBRC 110442 / TA 4)</name>
    <dbReference type="NCBI Taxonomy" id="595494"/>
    <lineage>
        <taxon>Bacteria</taxon>
        <taxon>Pseudomonadati</taxon>
        <taxon>Pseudomonadota</taxon>
        <taxon>Gammaproteobacteria</taxon>
        <taxon>Aeromonadales</taxon>
        <taxon>Aeromonadaceae</taxon>
        <taxon>Tolumonas</taxon>
    </lineage>
</organism>
<protein>
    <recommendedName>
        <fullName evidence="1">3-isopropylmalate dehydratase large subunit</fullName>
        <ecNumber evidence="1">4.2.1.33</ecNumber>
    </recommendedName>
    <alternativeName>
        <fullName evidence="1">Alpha-IPM isomerase</fullName>
        <shortName evidence="1">IPMI</shortName>
    </alternativeName>
    <alternativeName>
        <fullName evidence="1">Isopropylmalate isomerase</fullName>
    </alternativeName>
</protein>
<gene>
    <name evidence="1" type="primary">leuC</name>
    <name type="ordered locus">Tola_0680</name>
</gene>
<sequence length="465" mass="49559">MAKTLYQKVFEAHVVYEAAGETPIIYIDRHLVHEVTSPQAFDGLREKGRKVRRTDRTWATMDHNVSTTSNDINASGEMARVQMQTLMKNTDDFGVPLYGLNHKWQGIVHVMGPEIGLTLPGTTIVCGDSHTATHGAFGALAFGIGTSEVEHVLATQTLKQSRAKTMKIEVTGKVGPGVTAKDIVLAIIGKTGTAGGTGYVVEFCGTAIQALTMEERMTVCNMAIELGAKAGMVAADQTTFDYLKGRPFAPKGADWDAAVEYWSTLKTDAGAKFDAELVLDGAAIEPQVTWGTNPGQVISINTPIPAPEDFADPVARSSAQKALEYMALTAGQKLSDVKIDKAFIGSCTNGRIEDIRAAAAVAKGRKVAPGVQALVVPGSQQVKAQAEAEGLDKILTEAGFEWRLPGCSMCLAMNNDRLEPGERCAATSNRNFEGRQGRGGRTHLVSPAMAAAAAITGHFVDVREL</sequence>
<name>LEUC_TOLAT</name>
<accession>C4LAV5</accession>
<keyword id="KW-0004">4Fe-4S</keyword>
<keyword id="KW-0028">Amino-acid biosynthesis</keyword>
<keyword id="KW-0100">Branched-chain amino acid biosynthesis</keyword>
<keyword id="KW-0408">Iron</keyword>
<keyword id="KW-0411">Iron-sulfur</keyword>
<keyword id="KW-0432">Leucine biosynthesis</keyword>
<keyword id="KW-0456">Lyase</keyword>
<keyword id="KW-0479">Metal-binding</keyword>
<keyword id="KW-1185">Reference proteome</keyword>
<feature type="chain" id="PRO_1000213332" description="3-isopropylmalate dehydratase large subunit">
    <location>
        <begin position="1"/>
        <end position="465"/>
    </location>
</feature>
<feature type="binding site" evidence="1">
    <location>
        <position position="347"/>
    </location>
    <ligand>
        <name>[4Fe-4S] cluster</name>
        <dbReference type="ChEBI" id="CHEBI:49883"/>
    </ligand>
</feature>
<feature type="binding site" evidence="1">
    <location>
        <position position="407"/>
    </location>
    <ligand>
        <name>[4Fe-4S] cluster</name>
        <dbReference type="ChEBI" id="CHEBI:49883"/>
    </ligand>
</feature>
<feature type="binding site" evidence="1">
    <location>
        <position position="410"/>
    </location>
    <ligand>
        <name>[4Fe-4S] cluster</name>
        <dbReference type="ChEBI" id="CHEBI:49883"/>
    </ligand>
</feature>
<dbReference type="EC" id="4.2.1.33" evidence="1"/>
<dbReference type="EMBL" id="CP001616">
    <property type="protein sequence ID" value="ACQ92309.1"/>
    <property type="molecule type" value="Genomic_DNA"/>
</dbReference>
<dbReference type="RefSeq" id="WP_012728908.1">
    <property type="nucleotide sequence ID" value="NC_012691.1"/>
</dbReference>
<dbReference type="SMR" id="C4LAV5"/>
<dbReference type="STRING" id="595494.Tola_0680"/>
<dbReference type="KEGG" id="tau:Tola_0680"/>
<dbReference type="eggNOG" id="COG0065">
    <property type="taxonomic scope" value="Bacteria"/>
</dbReference>
<dbReference type="HOGENOM" id="CLU_006714_3_4_6"/>
<dbReference type="OrthoDB" id="9802769at2"/>
<dbReference type="UniPathway" id="UPA00048">
    <property type="reaction ID" value="UER00071"/>
</dbReference>
<dbReference type="Proteomes" id="UP000009073">
    <property type="component" value="Chromosome"/>
</dbReference>
<dbReference type="GO" id="GO:0003861">
    <property type="term" value="F:3-isopropylmalate dehydratase activity"/>
    <property type="evidence" value="ECO:0007669"/>
    <property type="project" value="UniProtKB-UniRule"/>
</dbReference>
<dbReference type="GO" id="GO:0051539">
    <property type="term" value="F:4 iron, 4 sulfur cluster binding"/>
    <property type="evidence" value="ECO:0007669"/>
    <property type="project" value="UniProtKB-KW"/>
</dbReference>
<dbReference type="GO" id="GO:0046872">
    <property type="term" value="F:metal ion binding"/>
    <property type="evidence" value="ECO:0007669"/>
    <property type="project" value="UniProtKB-KW"/>
</dbReference>
<dbReference type="GO" id="GO:0009098">
    <property type="term" value="P:L-leucine biosynthetic process"/>
    <property type="evidence" value="ECO:0007669"/>
    <property type="project" value="UniProtKB-UniRule"/>
</dbReference>
<dbReference type="CDD" id="cd01583">
    <property type="entry name" value="IPMI"/>
    <property type="match status" value="1"/>
</dbReference>
<dbReference type="FunFam" id="3.30.499.10:FF:000006">
    <property type="entry name" value="3-isopropylmalate dehydratase large subunit"/>
    <property type="match status" value="1"/>
</dbReference>
<dbReference type="FunFam" id="3.30.499.10:FF:000007">
    <property type="entry name" value="3-isopropylmalate dehydratase large subunit"/>
    <property type="match status" value="1"/>
</dbReference>
<dbReference type="Gene3D" id="3.30.499.10">
    <property type="entry name" value="Aconitase, domain 3"/>
    <property type="match status" value="2"/>
</dbReference>
<dbReference type="HAMAP" id="MF_01026">
    <property type="entry name" value="LeuC_type1"/>
    <property type="match status" value="1"/>
</dbReference>
<dbReference type="InterPro" id="IPR004430">
    <property type="entry name" value="3-IsopropMal_deHydase_lsu"/>
</dbReference>
<dbReference type="InterPro" id="IPR015931">
    <property type="entry name" value="Acnase/IPM_dHydase_lsu_aba_1/3"/>
</dbReference>
<dbReference type="InterPro" id="IPR001030">
    <property type="entry name" value="Acoase/IPM_deHydtase_lsu_aba"/>
</dbReference>
<dbReference type="InterPro" id="IPR018136">
    <property type="entry name" value="Aconitase_4Fe-4S_BS"/>
</dbReference>
<dbReference type="InterPro" id="IPR036008">
    <property type="entry name" value="Aconitase_4Fe-4S_dom"/>
</dbReference>
<dbReference type="InterPro" id="IPR050067">
    <property type="entry name" value="IPM_dehydratase_rel_enz"/>
</dbReference>
<dbReference type="InterPro" id="IPR033941">
    <property type="entry name" value="IPMI_cat"/>
</dbReference>
<dbReference type="NCBIfam" id="TIGR00170">
    <property type="entry name" value="leuC"/>
    <property type="match status" value="1"/>
</dbReference>
<dbReference type="NCBIfam" id="NF004016">
    <property type="entry name" value="PRK05478.1"/>
    <property type="match status" value="1"/>
</dbReference>
<dbReference type="NCBIfam" id="NF009116">
    <property type="entry name" value="PRK12466.1"/>
    <property type="match status" value="1"/>
</dbReference>
<dbReference type="PANTHER" id="PTHR43822:SF9">
    <property type="entry name" value="3-ISOPROPYLMALATE DEHYDRATASE"/>
    <property type="match status" value="1"/>
</dbReference>
<dbReference type="PANTHER" id="PTHR43822">
    <property type="entry name" value="HOMOACONITASE, MITOCHONDRIAL-RELATED"/>
    <property type="match status" value="1"/>
</dbReference>
<dbReference type="Pfam" id="PF00330">
    <property type="entry name" value="Aconitase"/>
    <property type="match status" value="1"/>
</dbReference>
<dbReference type="PRINTS" id="PR00415">
    <property type="entry name" value="ACONITASE"/>
</dbReference>
<dbReference type="SUPFAM" id="SSF53732">
    <property type="entry name" value="Aconitase iron-sulfur domain"/>
    <property type="match status" value="1"/>
</dbReference>
<dbReference type="PROSITE" id="PS00450">
    <property type="entry name" value="ACONITASE_1"/>
    <property type="match status" value="1"/>
</dbReference>
<dbReference type="PROSITE" id="PS01244">
    <property type="entry name" value="ACONITASE_2"/>
    <property type="match status" value="1"/>
</dbReference>